<accession>A1BG29</accession>
<sequence length="400" mass="44154">MSKEKIAIAYSGGLDTSIMIKWLKDKYDAEIVAVTGNLGQQKEIENLESKAIATGASAFQFVDLRKEFVEEYIWKALKAGALYEDVYPLATALGRPLLAKAIVDAALAEGCTMLAHGCTGKGNDQVRFEVTFASLAPHLKVLAPLREWEFTSREAEIAYALEHNIPVSATKKSPYSIDENIWGISIECGVLEDPMVAPPEDAYQITTSPENAPDRPTVVDIEFVQGVPVSLDGKTMSGLELIMKLNETGAANGVGRLDMIENRVVGIKSREIYEAPAATILHFAHRELERLTLEKTVFQYKKNISQDYANIIYNGLWFSPMRHALDAFIEETQKPVTGLVRVKLYKGSLSLLGRTSPNSLYNEELATYTEADTFNHKAAAGFIHLYGLGLKTFSEVNPAR</sequence>
<protein>
    <recommendedName>
        <fullName evidence="1">Argininosuccinate synthase</fullName>
        <ecNumber evidence="1">6.3.4.5</ecNumber>
    </recommendedName>
    <alternativeName>
        <fullName evidence="1">Citrulline--aspartate ligase</fullName>
    </alternativeName>
</protein>
<dbReference type="EC" id="6.3.4.5" evidence="1"/>
<dbReference type="EMBL" id="CP000492">
    <property type="protein sequence ID" value="ABL65356.1"/>
    <property type="molecule type" value="Genomic_DNA"/>
</dbReference>
<dbReference type="RefSeq" id="WP_011745179.1">
    <property type="nucleotide sequence ID" value="NC_008639.1"/>
</dbReference>
<dbReference type="SMR" id="A1BG29"/>
<dbReference type="STRING" id="290317.Cpha266_1325"/>
<dbReference type="KEGG" id="cph:Cpha266_1325"/>
<dbReference type="eggNOG" id="COG0137">
    <property type="taxonomic scope" value="Bacteria"/>
</dbReference>
<dbReference type="HOGENOM" id="CLU_032784_4_2_10"/>
<dbReference type="OrthoDB" id="9801641at2"/>
<dbReference type="UniPathway" id="UPA00068">
    <property type="reaction ID" value="UER00113"/>
</dbReference>
<dbReference type="Proteomes" id="UP000008701">
    <property type="component" value="Chromosome"/>
</dbReference>
<dbReference type="GO" id="GO:0005737">
    <property type="term" value="C:cytoplasm"/>
    <property type="evidence" value="ECO:0007669"/>
    <property type="project" value="UniProtKB-SubCell"/>
</dbReference>
<dbReference type="GO" id="GO:0004055">
    <property type="term" value="F:argininosuccinate synthase activity"/>
    <property type="evidence" value="ECO:0007669"/>
    <property type="project" value="UniProtKB-UniRule"/>
</dbReference>
<dbReference type="GO" id="GO:0005524">
    <property type="term" value="F:ATP binding"/>
    <property type="evidence" value="ECO:0007669"/>
    <property type="project" value="UniProtKB-UniRule"/>
</dbReference>
<dbReference type="GO" id="GO:0000053">
    <property type="term" value="P:argininosuccinate metabolic process"/>
    <property type="evidence" value="ECO:0007669"/>
    <property type="project" value="TreeGrafter"/>
</dbReference>
<dbReference type="GO" id="GO:0006526">
    <property type="term" value="P:L-arginine biosynthetic process"/>
    <property type="evidence" value="ECO:0007669"/>
    <property type="project" value="UniProtKB-UniRule"/>
</dbReference>
<dbReference type="GO" id="GO:0000050">
    <property type="term" value="P:urea cycle"/>
    <property type="evidence" value="ECO:0007669"/>
    <property type="project" value="TreeGrafter"/>
</dbReference>
<dbReference type="CDD" id="cd01999">
    <property type="entry name" value="ASS"/>
    <property type="match status" value="1"/>
</dbReference>
<dbReference type="FunFam" id="3.40.50.620:FF:000019">
    <property type="entry name" value="Argininosuccinate synthase"/>
    <property type="match status" value="1"/>
</dbReference>
<dbReference type="FunFam" id="3.90.1260.10:FF:000007">
    <property type="entry name" value="Argininosuccinate synthase"/>
    <property type="match status" value="1"/>
</dbReference>
<dbReference type="Gene3D" id="3.90.1260.10">
    <property type="entry name" value="Argininosuccinate synthetase, chain A, domain 2"/>
    <property type="match status" value="1"/>
</dbReference>
<dbReference type="Gene3D" id="3.40.50.620">
    <property type="entry name" value="HUPs"/>
    <property type="match status" value="1"/>
</dbReference>
<dbReference type="Gene3D" id="1.20.5.470">
    <property type="entry name" value="Single helix bin"/>
    <property type="match status" value="1"/>
</dbReference>
<dbReference type="HAMAP" id="MF_00005">
    <property type="entry name" value="Arg_succ_synth_type1"/>
    <property type="match status" value="1"/>
</dbReference>
<dbReference type="InterPro" id="IPR048268">
    <property type="entry name" value="Arginosuc_syn_C"/>
</dbReference>
<dbReference type="InterPro" id="IPR048267">
    <property type="entry name" value="Arginosuc_syn_N"/>
</dbReference>
<dbReference type="InterPro" id="IPR001518">
    <property type="entry name" value="Arginosuc_synth"/>
</dbReference>
<dbReference type="InterPro" id="IPR018223">
    <property type="entry name" value="Arginosuc_synth_CS"/>
</dbReference>
<dbReference type="InterPro" id="IPR023434">
    <property type="entry name" value="Arginosuc_synth_type_1_subfam"/>
</dbReference>
<dbReference type="InterPro" id="IPR024074">
    <property type="entry name" value="AS_cat/multimer_dom_body"/>
</dbReference>
<dbReference type="InterPro" id="IPR014729">
    <property type="entry name" value="Rossmann-like_a/b/a_fold"/>
</dbReference>
<dbReference type="NCBIfam" id="TIGR00032">
    <property type="entry name" value="argG"/>
    <property type="match status" value="1"/>
</dbReference>
<dbReference type="NCBIfam" id="NF001770">
    <property type="entry name" value="PRK00509.1"/>
    <property type="match status" value="1"/>
</dbReference>
<dbReference type="PANTHER" id="PTHR11587">
    <property type="entry name" value="ARGININOSUCCINATE SYNTHASE"/>
    <property type="match status" value="1"/>
</dbReference>
<dbReference type="PANTHER" id="PTHR11587:SF2">
    <property type="entry name" value="ARGININOSUCCINATE SYNTHASE"/>
    <property type="match status" value="1"/>
</dbReference>
<dbReference type="Pfam" id="PF20979">
    <property type="entry name" value="Arginosuc_syn_C"/>
    <property type="match status" value="1"/>
</dbReference>
<dbReference type="Pfam" id="PF00764">
    <property type="entry name" value="Arginosuc_synth"/>
    <property type="match status" value="1"/>
</dbReference>
<dbReference type="SUPFAM" id="SSF52402">
    <property type="entry name" value="Adenine nucleotide alpha hydrolases-like"/>
    <property type="match status" value="1"/>
</dbReference>
<dbReference type="SUPFAM" id="SSF69864">
    <property type="entry name" value="Argininosuccinate synthetase, C-terminal domain"/>
    <property type="match status" value="1"/>
</dbReference>
<dbReference type="PROSITE" id="PS00564">
    <property type="entry name" value="ARGININOSUCCIN_SYN_1"/>
    <property type="match status" value="1"/>
</dbReference>
<dbReference type="PROSITE" id="PS00565">
    <property type="entry name" value="ARGININOSUCCIN_SYN_2"/>
    <property type="match status" value="1"/>
</dbReference>
<reference key="1">
    <citation type="submission" date="2006-12" db="EMBL/GenBank/DDBJ databases">
        <title>Complete sequence of Chlorobium phaeobacteroides DSM 266.</title>
        <authorList>
            <consortium name="US DOE Joint Genome Institute"/>
            <person name="Copeland A."/>
            <person name="Lucas S."/>
            <person name="Lapidus A."/>
            <person name="Barry K."/>
            <person name="Detter J.C."/>
            <person name="Glavina del Rio T."/>
            <person name="Hammon N."/>
            <person name="Israni S."/>
            <person name="Pitluck S."/>
            <person name="Goltsman E."/>
            <person name="Schmutz J."/>
            <person name="Larimer F."/>
            <person name="Land M."/>
            <person name="Hauser L."/>
            <person name="Mikhailova N."/>
            <person name="Li T."/>
            <person name="Overmann J."/>
            <person name="Bryant D.A."/>
            <person name="Richardson P."/>
        </authorList>
    </citation>
    <scope>NUCLEOTIDE SEQUENCE [LARGE SCALE GENOMIC DNA]</scope>
    <source>
        <strain>DSM 266 / SMG 266 / 2430</strain>
    </source>
</reference>
<organism>
    <name type="scientific">Chlorobium phaeobacteroides (strain DSM 266 / SMG 266 / 2430)</name>
    <dbReference type="NCBI Taxonomy" id="290317"/>
    <lineage>
        <taxon>Bacteria</taxon>
        <taxon>Pseudomonadati</taxon>
        <taxon>Chlorobiota</taxon>
        <taxon>Chlorobiia</taxon>
        <taxon>Chlorobiales</taxon>
        <taxon>Chlorobiaceae</taxon>
        <taxon>Chlorobium/Pelodictyon group</taxon>
        <taxon>Chlorobium</taxon>
    </lineage>
</organism>
<comment type="catalytic activity">
    <reaction evidence="1">
        <text>L-citrulline + L-aspartate + ATP = 2-(N(omega)-L-arginino)succinate + AMP + diphosphate + H(+)</text>
        <dbReference type="Rhea" id="RHEA:10932"/>
        <dbReference type="ChEBI" id="CHEBI:15378"/>
        <dbReference type="ChEBI" id="CHEBI:29991"/>
        <dbReference type="ChEBI" id="CHEBI:30616"/>
        <dbReference type="ChEBI" id="CHEBI:33019"/>
        <dbReference type="ChEBI" id="CHEBI:57472"/>
        <dbReference type="ChEBI" id="CHEBI:57743"/>
        <dbReference type="ChEBI" id="CHEBI:456215"/>
        <dbReference type="EC" id="6.3.4.5"/>
    </reaction>
</comment>
<comment type="pathway">
    <text evidence="1">Amino-acid biosynthesis; L-arginine biosynthesis; L-arginine from L-ornithine and carbamoyl phosphate: step 2/3.</text>
</comment>
<comment type="subunit">
    <text evidence="1">Homotetramer.</text>
</comment>
<comment type="subcellular location">
    <subcellularLocation>
        <location evidence="1">Cytoplasm</location>
    </subcellularLocation>
</comment>
<comment type="similarity">
    <text evidence="1">Belongs to the argininosuccinate synthase family. Type 1 subfamily.</text>
</comment>
<keyword id="KW-0028">Amino-acid biosynthesis</keyword>
<keyword id="KW-0055">Arginine biosynthesis</keyword>
<keyword id="KW-0067">ATP-binding</keyword>
<keyword id="KW-0963">Cytoplasm</keyword>
<keyword id="KW-0436">Ligase</keyword>
<keyword id="KW-0547">Nucleotide-binding</keyword>
<keyword id="KW-1185">Reference proteome</keyword>
<evidence type="ECO:0000255" key="1">
    <source>
        <dbReference type="HAMAP-Rule" id="MF_00005"/>
    </source>
</evidence>
<gene>
    <name evidence="1" type="primary">argG</name>
    <name type="ordered locus">Cpha266_1325</name>
</gene>
<proteinExistence type="inferred from homology"/>
<feature type="chain" id="PRO_1000000391" description="Argininosuccinate synthase">
    <location>
        <begin position="1"/>
        <end position="400"/>
    </location>
</feature>
<feature type="binding site" evidence="1">
    <location>
        <begin position="9"/>
        <end position="17"/>
    </location>
    <ligand>
        <name>ATP</name>
        <dbReference type="ChEBI" id="CHEBI:30616"/>
    </ligand>
</feature>
<feature type="binding site" evidence="1">
    <location>
        <position position="87"/>
    </location>
    <ligand>
        <name>L-citrulline</name>
        <dbReference type="ChEBI" id="CHEBI:57743"/>
    </ligand>
</feature>
<feature type="binding site" evidence="1">
    <location>
        <position position="117"/>
    </location>
    <ligand>
        <name>ATP</name>
        <dbReference type="ChEBI" id="CHEBI:30616"/>
    </ligand>
</feature>
<feature type="binding site" evidence="1">
    <location>
        <position position="119"/>
    </location>
    <ligand>
        <name>L-aspartate</name>
        <dbReference type="ChEBI" id="CHEBI:29991"/>
    </ligand>
</feature>
<feature type="binding site" evidence="1">
    <location>
        <position position="123"/>
    </location>
    <ligand>
        <name>L-aspartate</name>
        <dbReference type="ChEBI" id="CHEBI:29991"/>
    </ligand>
</feature>
<feature type="binding site" evidence="1">
    <location>
        <position position="123"/>
    </location>
    <ligand>
        <name>L-citrulline</name>
        <dbReference type="ChEBI" id="CHEBI:57743"/>
    </ligand>
</feature>
<feature type="binding site" evidence="1">
    <location>
        <position position="124"/>
    </location>
    <ligand>
        <name>L-aspartate</name>
        <dbReference type="ChEBI" id="CHEBI:29991"/>
    </ligand>
</feature>
<feature type="binding site" evidence="1">
    <location>
        <position position="127"/>
    </location>
    <ligand>
        <name>L-citrulline</name>
        <dbReference type="ChEBI" id="CHEBI:57743"/>
    </ligand>
</feature>
<feature type="binding site" evidence="1">
    <location>
        <position position="176"/>
    </location>
    <ligand>
        <name>L-citrulline</name>
        <dbReference type="ChEBI" id="CHEBI:57743"/>
    </ligand>
</feature>
<feature type="binding site" evidence="1">
    <location>
        <position position="185"/>
    </location>
    <ligand>
        <name>L-citrulline</name>
        <dbReference type="ChEBI" id="CHEBI:57743"/>
    </ligand>
</feature>
<feature type="binding site" evidence="1">
    <location>
        <position position="261"/>
    </location>
    <ligand>
        <name>L-citrulline</name>
        <dbReference type="ChEBI" id="CHEBI:57743"/>
    </ligand>
</feature>
<feature type="binding site" evidence="1">
    <location>
        <position position="273"/>
    </location>
    <ligand>
        <name>L-citrulline</name>
        <dbReference type="ChEBI" id="CHEBI:57743"/>
    </ligand>
</feature>
<name>ASSY_CHLPD</name>